<gene>
    <name type="primary">DCL2</name>
    <name type="ORF">SNOG_07542</name>
</gene>
<organism>
    <name type="scientific">Phaeosphaeria nodorum (strain SN15 / ATCC MYA-4574 / FGSC 10173)</name>
    <name type="common">Glume blotch fungus</name>
    <name type="synonym">Parastagonospora nodorum</name>
    <dbReference type="NCBI Taxonomy" id="321614"/>
    <lineage>
        <taxon>Eukaryota</taxon>
        <taxon>Fungi</taxon>
        <taxon>Dikarya</taxon>
        <taxon>Ascomycota</taxon>
        <taxon>Pezizomycotina</taxon>
        <taxon>Dothideomycetes</taxon>
        <taxon>Pleosporomycetidae</taxon>
        <taxon>Pleosporales</taxon>
        <taxon>Pleosporineae</taxon>
        <taxon>Phaeosphaeriaceae</taxon>
        <taxon>Parastagonospora</taxon>
    </lineage>
</organism>
<evidence type="ECO:0000250" key="1"/>
<evidence type="ECO:0000255" key="2">
    <source>
        <dbReference type="PROSITE-ProRule" id="PRU00177"/>
    </source>
</evidence>
<evidence type="ECO:0000255" key="3">
    <source>
        <dbReference type="PROSITE-ProRule" id="PRU00541"/>
    </source>
</evidence>
<evidence type="ECO:0000255" key="4">
    <source>
        <dbReference type="PROSITE-ProRule" id="PRU00542"/>
    </source>
</evidence>
<evidence type="ECO:0000255" key="5">
    <source>
        <dbReference type="PROSITE-ProRule" id="PRU00657"/>
    </source>
</evidence>
<evidence type="ECO:0000305" key="6"/>
<dbReference type="EC" id="3.1.26.-"/>
<dbReference type="EC" id="3.6.4.-"/>
<dbReference type="EMBL" id="CH445335">
    <property type="protein sequence ID" value="EAT85008.2"/>
    <property type="status" value="ALT_SEQ"/>
    <property type="molecule type" value="Genomic_DNA"/>
</dbReference>
<dbReference type="RefSeq" id="XP_001797877.1">
    <property type="nucleotide sequence ID" value="XM_001797825.1"/>
</dbReference>
<dbReference type="SMR" id="Q0UL22"/>
<dbReference type="STRING" id="321614.Q0UL22"/>
<dbReference type="GeneID" id="5974770"/>
<dbReference type="KEGG" id="pno:SNOG_07542"/>
<dbReference type="VEuPathDB" id="FungiDB:JI435_075420"/>
<dbReference type="eggNOG" id="KOG0701">
    <property type="taxonomic scope" value="Eukaryota"/>
</dbReference>
<dbReference type="InParanoid" id="Q0UL22"/>
<dbReference type="Proteomes" id="UP000001055">
    <property type="component" value="Unassembled WGS sequence"/>
</dbReference>
<dbReference type="GO" id="GO:0005737">
    <property type="term" value="C:cytoplasm"/>
    <property type="evidence" value="ECO:0000318"/>
    <property type="project" value="GO_Central"/>
</dbReference>
<dbReference type="GO" id="GO:0005634">
    <property type="term" value="C:nucleus"/>
    <property type="evidence" value="ECO:0000318"/>
    <property type="project" value="GO_Central"/>
</dbReference>
<dbReference type="GO" id="GO:0005524">
    <property type="term" value="F:ATP binding"/>
    <property type="evidence" value="ECO:0007669"/>
    <property type="project" value="UniProtKB-KW"/>
</dbReference>
<dbReference type="GO" id="GO:0004386">
    <property type="term" value="F:helicase activity"/>
    <property type="evidence" value="ECO:0007669"/>
    <property type="project" value="UniProtKB-KW"/>
</dbReference>
<dbReference type="GO" id="GO:0046872">
    <property type="term" value="F:metal ion binding"/>
    <property type="evidence" value="ECO:0007669"/>
    <property type="project" value="UniProtKB-KW"/>
</dbReference>
<dbReference type="GO" id="GO:0004525">
    <property type="term" value="F:ribonuclease III activity"/>
    <property type="evidence" value="ECO:0000318"/>
    <property type="project" value="GO_Central"/>
</dbReference>
<dbReference type="GO" id="GO:0003723">
    <property type="term" value="F:RNA binding"/>
    <property type="evidence" value="ECO:0000318"/>
    <property type="project" value="GO_Central"/>
</dbReference>
<dbReference type="GO" id="GO:0051607">
    <property type="term" value="P:defense response to virus"/>
    <property type="evidence" value="ECO:0007669"/>
    <property type="project" value="UniProtKB-KW"/>
</dbReference>
<dbReference type="GO" id="GO:0050688">
    <property type="term" value="P:regulation of defense response to virus"/>
    <property type="evidence" value="ECO:0007669"/>
    <property type="project" value="UniProtKB-KW"/>
</dbReference>
<dbReference type="GO" id="GO:0030422">
    <property type="term" value="P:siRNA processing"/>
    <property type="evidence" value="ECO:0000318"/>
    <property type="project" value="GO_Central"/>
</dbReference>
<dbReference type="CDD" id="cd18034">
    <property type="entry name" value="DEXHc_dicer"/>
    <property type="match status" value="1"/>
</dbReference>
<dbReference type="CDD" id="cd00593">
    <property type="entry name" value="RIBOc"/>
    <property type="match status" value="2"/>
</dbReference>
<dbReference type="CDD" id="cd18802">
    <property type="entry name" value="SF2_C_dicer"/>
    <property type="match status" value="1"/>
</dbReference>
<dbReference type="FunFam" id="3.40.50.300:FF:001669">
    <property type="entry name" value="Dicer-like protein 1"/>
    <property type="match status" value="1"/>
</dbReference>
<dbReference type="FunFam" id="1.10.1520.10:FF:000032">
    <property type="entry name" value="Dicer-like protein 2"/>
    <property type="match status" value="1"/>
</dbReference>
<dbReference type="FunFam" id="3.40.50.300:FF:002480">
    <property type="entry name" value="Dicer-like protein 2"/>
    <property type="match status" value="1"/>
</dbReference>
<dbReference type="Gene3D" id="3.30.160.380">
    <property type="entry name" value="Dicer dimerisation domain"/>
    <property type="match status" value="1"/>
</dbReference>
<dbReference type="Gene3D" id="3.40.50.300">
    <property type="entry name" value="P-loop containing nucleotide triphosphate hydrolases"/>
    <property type="match status" value="2"/>
</dbReference>
<dbReference type="Gene3D" id="1.10.1520.10">
    <property type="entry name" value="Ribonuclease III domain"/>
    <property type="match status" value="2"/>
</dbReference>
<dbReference type="InterPro" id="IPR011545">
    <property type="entry name" value="DEAD/DEAH_box_helicase_dom"/>
</dbReference>
<dbReference type="InterPro" id="IPR038248">
    <property type="entry name" value="Dicer_dimer_sf"/>
</dbReference>
<dbReference type="InterPro" id="IPR005034">
    <property type="entry name" value="Dicer_dimerisation_dom"/>
</dbReference>
<dbReference type="InterPro" id="IPR056755">
    <property type="entry name" value="DSRM_2"/>
</dbReference>
<dbReference type="InterPro" id="IPR014001">
    <property type="entry name" value="Helicase_ATP-bd"/>
</dbReference>
<dbReference type="InterPro" id="IPR001650">
    <property type="entry name" value="Helicase_C-like"/>
</dbReference>
<dbReference type="InterPro" id="IPR027417">
    <property type="entry name" value="P-loop_NTPase"/>
</dbReference>
<dbReference type="InterPro" id="IPR000999">
    <property type="entry name" value="RNase_III_dom"/>
</dbReference>
<dbReference type="InterPro" id="IPR036389">
    <property type="entry name" value="RNase_III_sf"/>
</dbReference>
<dbReference type="PANTHER" id="PTHR14950">
    <property type="entry name" value="DICER-RELATED"/>
    <property type="match status" value="1"/>
</dbReference>
<dbReference type="PANTHER" id="PTHR14950:SF37">
    <property type="entry name" value="ENDORIBONUCLEASE DICER"/>
    <property type="match status" value="1"/>
</dbReference>
<dbReference type="Pfam" id="PF00270">
    <property type="entry name" value="DEAD"/>
    <property type="match status" value="1"/>
</dbReference>
<dbReference type="Pfam" id="PF03368">
    <property type="entry name" value="Dicer_dimer"/>
    <property type="match status" value="1"/>
</dbReference>
<dbReference type="Pfam" id="PF24995">
    <property type="entry name" value="DSRM_2"/>
    <property type="match status" value="1"/>
</dbReference>
<dbReference type="Pfam" id="PF00271">
    <property type="entry name" value="Helicase_C"/>
    <property type="match status" value="1"/>
</dbReference>
<dbReference type="Pfam" id="PF00636">
    <property type="entry name" value="Ribonuclease_3"/>
    <property type="match status" value="2"/>
</dbReference>
<dbReference type="SMART" id="SM00487">
    <property type="entry name" value="DEXDc"/>
    <property type="match status" value="1"/>
</dbReference>
<dbReference type="SMART" id="SM00490">
    <property type="entry name" value="HELICc"/>
    <property type="match status" value="1"/>
</dbReference>
<dbReference type="SMART" id="SM00535">
    <property type="entry name" value="RIBOc"/>
    <property type="match status" value="2"/>
</dbReference>
<dbReference type="SUPFAM" id="SSF54768">
    <property type="entry name" value="dsRNA-binding domain-like"/>
    <property type="match status" value="1"/>
</dbReference>
<dbReference type="SUPFAM" id="SSF52540">
    <property type="entry name" value="P-loop containing nucleoside triphosphate hydrolases"/>
    <property type="match status" value="1"/>
</dbReference>
<dbReference type="SUPFAM" id="SSF69065">
    <property type="entry name" value="RNase III domain-like"/>
    <property type="match status" value="2"/>
</dbReference>
<dbReference type="PROSITE" id="PS51327">
    <property type="entry name" value="DICER_DSRBF"/>
    <property type="match status" value="1"/>
</dbReference>
<dbReference type="PROSITE" id="PS51192">
    <property type="entry name" value="HELICASE_ATP_BIND_1"/>
    <property type="match status" value="1"/>
</dbReference>
<dbReference type="PROSITE" id="PS51194">
    <property type="entry name" value="HELICASE_CTER"/>
    <property type="match status" value="1"/>
</dbReference>
<dbReference type="PROSITE" id="PS00517">
    <property type="entry name" value="RNASE_3_1"/>
    <property type="match status" value="1"/>
</dbReference>
<dbReference type="PROSITE" id="PS50142">
    <property type="entry name" value="RNASE_3_2"/>
    <property type="match status" value="2"/>
</dbReference>
<keyword id="KW-0051">Antiviral defense</keyword>
<keyword id="KW-0930">Antiviral protein</keyword>
<keyword id="KW-0067">ATP-binding</keyword>
<keyword id="KW-0347">Helicase</keyword>
<keyword id="KW-0378">Hydrolase</keyword>
<keyword id="KW-0460">Magnesium</keyword>
<keyword id="KW-0464">Manganese</keyword>
<keyword id="KW-0479">Metal-binding</keyword>
<keyword id="KW-0547">Nucleotide-binding</keyword>
<keyword id="KW-0677">Repeat</keyword>
<keyword id="KW-0694">RNA-binding</keyword>
<proteinExistence type="inferred from homology"/>
<protein>
    <recommendedName>
        <fullName>Dicer-like protein 2</fullName>
    </recommendedName>
    <domain>
        <recommendedName>
            <fullName>Endoribonuclease DCL2</fullName>
            <ecNumber>3.1.26.-</ecNumber>
        </recommendedName>
    </domain>
    <domain>
        <recommendedName>
            <fullName>ATP-dependent helicase DCL2</fullName>
            <ecNumber>3.6.4.-</ecNumber>
        </recommendedName>
    </domain>
</protein>
<feature type="chain" id="PRO_0000306797" description="Dicer-like protein 2">
    <location>
        <begin position="1"/>
        <end position="1399"/>
    </location>
</feature>
<feature type="domain" description="Helicase ATP-binding" evidence="3">
    <location>
        <begin position="18"/>
        <end position="194"/>
    </location>
</feature>
<feature type="domain" description="Helicase C-terminal" evidence="4">
    <location>
        <begin position="364"/>
        <end position="549"/>
    </location>
</feature>
<feature type="domain" description="Dicer dsRNA-binding fold" evidence="5">
    <location>
        <begin position="562"/>
        <end position="656"/>
    </location>
</feature>
<feature type="domain" description="RNase III 1" evidence="2">
    <location>
        <begin position="897"/>
        <end position="1054"/>
    </location>
</feature>
<feature type="domain" description="RNase III 2" evidence="2">
    <location>
        <begin position="1094"/>
        <end position="1270"/>
    </location>
</feature>
<feature type="domain" description="DRBM">
    <location>
        <begin position="1301"/>
        <end position="1370"/>
    </location>
</feature>
<feature type="short sequence motif" description="DEAH box">
    <location>
        <begin position="139"/>
        <end position="142"/>
    </location>
</feature>
<feature type="binding site" evidence="3">
    <location>
        <begin position="31"/>
        <end position="38"/>
    </location>
    <ligand>
        <name>ATP</name>
        <dbReference type="ChEBI" id="CHEBI:30616"/>
    </ligand>
</feature>
<feature type="binding site" evidence="1">
    <location>
        <position position="1133"/>
    </location>
    <ligand>
        <name>Mg(2+)</name>
        <dbReference type="ChEBI" id="CHEBI:18420"/>
    </ligand>
</feature>
<feature type="binding site" evidence="1">
    <location>
        <position position="1256"/>
    </location>
    <ligand>
        <name>Mg(2+)</name>
        <dbReference type="ChEBI" id="CHEBI:18420"/>
    </ligand>
</feature>
<feature type="binding site" evidence="1">
    <location>
        <position position="1259"/>
    </location>
    <ligand>
        <name>Mg(2+)</name>
        <dbReference type="ChEBI" id="CHEBI:18420"/>
    </ligand>
</feature>
<feature type="site" description="Important for activity" evidence="1">
    <location>
        <position position="1252"/>
    </location>
</feature>
<comment type="function">
    <text evidence="1">Dicer-like endonuclease involved in cleaving double-stranded RNA in the RNA interference (RNAi) pathway. Produces 21 to 25 bp dsRNAs (siRNAs) which target the selective destruction of homologous RNAs leading to sequence-specific suppression of gene expression, called post-transcriptional gene silencing (PTGS). Part of a broad host defense response against viral infection and transposons (By similarity).</text>
</comment>
<comment type="cofactor">
    <cofactor evidence="1">
        <name>Mg(2+)</name>
        <dbReference type="ChEBI" id="CHEBI:18420"/>
    </cofactor>
    <cofactor evidence="1">
        <name>Mn(2+)</name>
        <dbReference type="ChEBI" id="CHEBI:29035"/>
    </cofactor>
</comment>
<comment type="similarity">
    <text evidence="5">Belongs to the helicase family. Dicer subfamily.</text>
</comment>
<comment type="sequence caution" evidence="6">
    <conflict type="erroneous gene model prediction">
        <sequence resource="EMBL-CDS" id="EAT85008"/>
    </conflict>
</comment>
<reference key="1">
    <citation type="journal article" date="2007" name="Plant Cell">
        <title>Dothideomycete-plant interactions illuminated by genome sequencing and EST analysis of the wheat pathogen Stagonospora nodorum.</title>
        <authorList>
            <person name="Hane J.K."/>
            <person name="Lowe R.G.T."/>
            <person name="Solomon P.S."/>
            <person name="Tan K.-C."/>
            <person name="Schoch C.L."/>
            <person name="Spatafora J.W."/>
            <person name="Crous P.W."/>
            <person name="Kodira C.D."/>
            <person name="Birren B.W."/>
            <person name="Galagan J.E."/>
            <person name="Torriani S.F.F."/>
            <person name="McDonald B.A."/>
            <person name="Oliver R.P."/>
        </authorList>
    </citation>
    <scope>NUCLEOTIDE SEQUENCE [LARGE SCALE GENOMIC DNA]</scope>
    <source>
        <strain>SN15 / ATCC MYA-4574 / FGSC 10173</strain>
    </source>
</reference>
<name>DCL2_PHANO</name>
<accession>Q0UL22</accession>
<sequence length="1399" mass="157596">MADSHDAPFRLRSYQAEMVEESMQSNIICVMDTGSGKTHIAIDRTRAELEICRPDKIVWFLAPTVTLCEQQFAVFKSNLPGYGIQLLSGKDNLDHWTDQGVWDDVLLNIRIVLSTHQVLLDALSHGFVKMRNLSLLIFDEAHHCSLKHPAHRIMSDFYKPRIGTELPRILGLSASPIKTAKVTSEDLQQIERNLCATVKTPKLHRSELLRYVHRPHLMRIDYPVEPQDLQSNMLSFLKSAYTNYDLQKDPWVSELLQQRQQGHDVTKNIHKVFIGGKTYCRDQLRSLALKAEAMSQELGMSVMDWYLRGCITQFSKMVHMSDSQLLDWSADEKRHLLEILRTLPSIDLNSHDIPPMSLGSMSHKLQLLIKFLVAEAKHDPEFTCLVFVEQRVWVACIAEVLAIHPETRDLLRVGTFVGESENSKRKANIASISEPRNQQATLENFRAGKLNLILATSVLEEGIDVSSCHLVVCFESPKNLKSFVQRRGRARKEESKYVIFVPQAGRRRDPESWQSLEEGMKAAYLDDLRQVKLATEKEQQSETGHRNFEVKSTGALLTLDNASQHLHHFCSILGAGPYIDNRPQFEFTEIRPGVITARVILPLTVDPEVRTACALDTWATEKMAKQDAAFEAYKALYVAGLVNDNLLPARQEADDELSELQIPDHRPSLVPVSPTLDPWPLFARHQQQNPHVYYRTRLTLHTVDDKPKHLILLTPKILPDIPELLLYWNSSTKLKIESSWLHDVVLNDEEISELKSVTYKILYSVFHNRMELNRRDFVWLVAPCDESGLLDSRIWLSEWRQHTCLATELIAQNSDWSLWGLVNQKGDARKYTPRSTSMNNQLWLLQLMQLPKRRDFLHPVLESANINDAYTKTDEMAAKDCIVDPVPAPYSVFALLLPSILHRFGMAIIAETLRTTLLGPVALDSAHSLLLTRALKSSAADGNDNYQRLEFLGDCILKFIATVHLMAANPKWPESHLTAKKGRIVSNGFLARATIAAGLDRFMITKSFTGAKWAPRYAGDLLAETGPAVKEERSSKLIADIIESLIGACYTVGGFEKAVLCVQTLLPLEPWISVPAANSILHEAAPAEADLMGLDVLETLIGYTFKKKPLLLEALTHASFSGPHVHCSYERLEFLGDAVLDYIISKRLHAHSPELSHQKMHAIRTATVNASFLAFRLFETTIDEETINKTSMRPESQKRAIWQFLRSGSPSLNANRDNALRQHEQVRDEIIIGLNEAARFPWHLFALTDPPKFLSDMVESVIGAVYIDSLGDILTCEAIVRRLGILDCLDHILCNGVDCLHPKERLGHLAVDKGVQYARVGMNTEPNEGDKMYKCQVKVGGEDVGDVAEGLKRLNAETVAAWKAVGVLESRKDSAIEIVSDVEEFFDADDGGGISLDDP</sequence>